<protein>
    <recommendedName>
        <fullName>Histidine ammonia-lyase</fullName>
        <shortName>Histidase</shortName>
        <ecNumber>4.3.1.3</ecNumber>
    </recommendedName>
</protein>
<gene>
    <name type="primary">hutH</name>
    <name type="ordered locus">SA0008</name>
</gene>
<proteinExistence type="evidence at protein level"/>
<dbReference type="EC" id="4.3.1.3"/>
<dbReference type="EMBL" id="BA000018">
    <property type="protein sequence ID" value="BAB41224.1"/>
    <property type="status" value="ALT_INIT"/>
    <property type="molecule type" value="Genomic_DNA"/>
</dbReference>
<dbReference type="PIR" id="H89758">
    <property type="entry name" value="H89758"/>
</dbReference>
<dbReference type="RefSeq" id="WP_000177465.1">
    <property type="nucleotide sequence ID" value="NC_002745.2"/>
</dbReference>
<dbReference type="SMR" id="P64416"/>
<dbReference type="EnsemblBacteria" id="BAB41224">
    <property type="protein sequence ID" value="BAB41224"/>
    <property type="gene ID" value="BAB41224"/>
</dbReference>
<dbReference type="KEGG" id="sau:SA0008"/>
<dbReference type="HOGENOM" id="CLU_014801_4_0_9"/>
<dbReference type="UniPathway" id="UPA00379">
    <property type="reaction ID" value="UER00549"/>
</dbReference>
<dbReference type="GO" id="GO:0005737">
    <property type="term" value="C:cytoplasm"/>
    <property type="evidence" value="ECO:0007669"/>
    <property type="project" value="UniProtKB-SubCell"/>
</dbReference>
<dbReference type="GO" id="GO:0004397">
    <property type="term" value="F:histidine ammonia-lyase activity"/>
    <property type="evidence" value="ECO:0007669"/>
    <property type="project" value="UniProtKB-UniRule"/>
</dbReference>
<dbReference type="GO" id="GO:0019556">
    <property type="term" value="P:L-histidine catabolic process to glutamate and formamide"/>
    <property type="evidence" value="ECO:0007669"/>
    <property type="project" value="UniProtKB-UniPathway"/>
</dbReference>
<dbReference type="GO" id="GO:0019557">
    <property type="term" value="P:L-histidine catabolic process to glutamate and formate"/>
    <property type="evidence" value="ECO:0007669"/>
    <property type="project" value="UniProtKB-UniPathway"/>
</dbReference>
<dbReference type="CDD" id="cd00332">
    <property type="entry name" value="PAL-HAL"/>
    <property type="match status" value="1"/>
</dbReference>
<dbReference type="FunFam" id="1.10.275.10:FF:000008">
    <property type="entry name" value="Histidine ammonia-lyase"/>
    <property type="match status" value="1"/>
</dbReference>
<dbReference type="FunFam" id="1.20.200.10:FF:000003">
    <property type="entry name" value="Histidine ammonia-lyase"/>
    <property type="match status" value="1"/>
</dbReference>
<dbReference type="Gene3D" id="1.20.200.10">
    <property type="entry name" value="Fumarase/aspartase (Central domain)"/>
    <property type="match status" value="1"/>
</dbReference>
<dbReference type="Gene3D" id="1.10.275.10">
    <property type="entry name" value="Fumarase/aspartase (N-terminal domain)"/>
    <property type="match status" value="1"/>
</dbReference>
<dbReference type="HAMAP" id="MF_00229">
    <property type="entry name" value="His_ammonia_lyase"/>
    <property type="match status" value="1"/>
</dbReference>
<dbReference type="InterPro" id="IPR001106">
    <property type="entry name" value="Aromatic_Lyase"/>
</dbReference>
<dbReference type="InterPro" id="IPR024083">
    <property type="entry name" value="Fumarase/histidase_N"/>
</dbReference>
<dbReference type="InterPro" id="IPR005921">
    <property type="entry name" value="HutH"/>
</dbReference>
<dbReference type="InterPro" id="IPR008948">
    <property type="entry name" value="L-Aspartase-like"/>
</dbReference>
<dbReference type="InterPro" id="IPR022313">
    <property type="entry name" value="Phe/His_NH3-lyase_AS"/>
</dbReference>
<dbReference type="NCBIfam" id="TIGR01225">
    <property type="entry name" value="hutH"/>
    <property type="match status" value="1"/>
</dbReference>
<dbReference type="NCBIfam" id="NF006871">
    <property type="entry name" value="PRK09367.1"/>
    <property type="match status" value="1"/>
</dbReference>
<dbReference type="PANTHER" id="PTHR10362">
    <property type="entry name" value="HISTIDINE AMMONIA-LYASE"/>
    <property type="match status" value="1"/>
</dbReference>
<dbReference type="Pfam" id="PF00221">
    <property type="entry name" value="Lyase_aromatic"/>
    <property type="match status" value="1"/>
</dbReference>
<dbReference type="SUPFAM" id="SSF48557">
    <property type="entry name" value="L-aspartase-like"/>
    <property type="match status" value="1"/>
</dbReference>
<dbReference type="PROSITE" id="PS00488">
    <property type="entry name" value="PAL_HISTIDASE"/>
    <property type="match status" value="1"/>
</dbReference>
<comment type="catalytic activity">
    <reaction>
        <text>L-histidine = trans-urocanate + NH4(+)</text>
        <dbReference type="Rhea" id="RHEA:21232"/>
        <dbReference type="ChEBI" id="CHEBI:17771"/>
        <dbReference type="ChEBI" id="CHEBI:28938"/>
        <dbReference type="ChEBI" id="CHEBI:57595"/>
        <dbReference type="EC" id="4.3.1.3"/>
    </reaction>
</comment>
<comment type="pathway">
    <text>Amino-acid degradation; L-histidine degradation into L-glutamate; N-formimidoyl-L-glutamate from L-histidine: step 1/3.</text>
</comment>
<comment type="subcellular location">
    <subcellularLocation>
        <location evidence="2">Cytoplasm</location>
    </subcellularLocation>
</comment>
<comment type="PTM">
    <text evidence="1">Contains an active site 4-methylidene-imidazol-5-one (MIO), which is formed autocatalytically by cyclization and dehydration of residues Ala-Ser-Gly.</text>
</comment>
<comment type="similarity">
    <text evidence="2">Belongs to the PAL/histidase family.</text>
</comment>
<comment type="sequence caution" evidence="2">
    <conflict type="erroneous initiation">
        <sequence resource="EMBL-CDS" id="BAB41224"/>
    </conflict>
</comment>
<name>HUTH_STAAN</name>
<accession>P64416</accession>
<accession>Q99XG3</accession>
<sequence length="504" mass="56090">MTLYLDGETLTIEDIKSFLQQQSKIEIIDDALERVKKSRAVVERIIENEETVYGITTGFGLFSDVRIDPTQYNELQVNLIRSHACGLGEPFSKEVALVMMILRLNTLLKGHSGATLELVRQLQFFINERIIPIIPQQGSLGASGDLAPLSHLALALIGEGKVLYRGEEKDSDDVLRELNRQPLNLQAKEGLALINGTQAMTAQGVISYIEAEDLGYQSEWIAALTHQSLNGIIDAYRHDVHSVRNFQEQINVAARMRDWLEGSTLTTRQAEIRVQDAYTLRCIPQIHGASFQVFNYVKQQLEFEMNAANDNPLIFEEANETFVISGGNFHGQPIAFALDHLKLGVSELANVSERRLERLVNPQLNGDLPAFLSPEPGLQSGAMIMQYAAASLVSENKTLAHPASVDSITSSANQEDHVSMGTTAARHGYQIIENARRVLAIECVIALQAAELKGVEGLSPKTRRKYEEFRSIVPSITHDRQFHKDIEAVAQYLKQSIYQTTACH</sequence>
<organism>
    <name type="scientific">Staphylococcus aureus (strain N315)</name>
    <dbReference type="NCBI Taxonomy" id="158879"/>
    <lineage>
        <taxon>Bacteria</taxon>
        <taxon>Bacillati</taxon>
        <taxon>Bacillota</taxon>
        <taxon>Bacilli</taxon>
        <taxon>Bacillales</taxon>
        <taxon>Staphylococcaceae</taxon>
        <taxon>Staphylococcus</taxon>
    </lineage>
</organism>
<feature type="chain" id="PRO_0000161031" description="Histidine ammonia-lyase">
    <location>
        <begin position="1"/>
        <end position="504"/>
    </location>
</feature>
<feature type="modified residue" description="2,3-didehydroalanine (Ser)" evidence="1">
    <location>
        <position position="143"/>
    </location>
</feature>
<feature type="cross-link" description="5-imidazolinone (Ala-Gly)" evidence="1">
    <location>
        <begin position="142"/>
        <end position="144"/>
    </location>
</feature>
<evidence type="ECO:0000250" key="1"/>
<evidence type="ECO:0000305" key="2"/>
<reference key="1">
    <citation type="journal article" date="2001" name="Lancet">
        <title>Whole genome sequencing of meticillin-resistant Staphylococcus aureus.</title>
        <authorList>
            <person name="Kuroda M."/>
            <person name="Ohta T."/>
            <person name="Uchiyama I."/>
            <person name="Baba T."/>
            <person name="Yuzawa H."/>
            <person name="Kobayashi I."/>
            <person name="Cui L."/>
            <person name="Oguchi A."/>
            <person name="Aoki K."/>
            <person name="Nagai Y."/>
            <person name="Lian J.-Q."/>
            <person name="Ito T."/>
            <person name="Kanamori M."/>
            <person name="Matsumaru H."/>
            <person name="Maruyama A."/>
            <person name="Murakami H."/>
            <person name="Hosoyama A."/>
            <person name="Mizutani-Ui Y."/>
            <person name="Takahashi N.K."/>
            <person name="Sawano T."/>
            <person name="Inoue R."/>
            <person name="Kaito C."/>
            <person name="Sekimizu K."/>
            <person name="Hirakawa H."/>
            <person name="Kuhara S."/>
            <person name="Goto S."/>
            <person name="Yabuzaki J."/>
            <person name="Kanehisa M."/>
            <person name="Yamashita A."/>
            <person name="Oshima K."/>
            <person name="Furuya K."/>
            <person name="Yoshino C."/>
            <person name="Shiba T."/>
            <person name="Hattori M."/>
            <person name="Ogasawara N."/>
            <person name="Hayashi H."/>
            <person name="Hiramatsu K."/>
        </authorList>
    </citation>
    <scope>NUCLEOTIDE SEQUENCE [LARGE SCALE GENOMIC DNA]</scope>
    <source>
        <strain>N315</strain>
    </source>
</reference>
<reference key="2">
    <citation type="submission" date="2007-10" db="UniProtKB">
        <title>Shotgun proteomic analysis of total and membrane protein extracts of S. aureus strain N315.</title>
        <authorList>
            <person name="Vaezzadeh A.R."/>
            <person name="Deshusses J."/>
            <person name="Lescuyer P."/>
            <person name="Hochstrasser D.F."/>
        </authorList>
    </citation>
    <scope>IDENTIFICATION BY MASS SPECTROMETRY [LARGE SCALE ANALYSIS]</scope>
    <source>
        <strain>N315</strain>
    </source>
</reference>
<keyword id="KW-0963">Cytoplasm</keyword>
<keyword id="KW-0369">Histidine metabolism</keyword>
<keyword id="KW-0456">Lyase</keyword>